<name>PHY1_SELMA</name>
<sequence length="1134" mass="124707">MSTTKLTYSSGSSAKSKHSVRVAQTTADAKLHAVYEESGESGDSFDYSKSINATKSTGETIPAQAVTAYLQRMQRGGLVQPFGCMLAVEEGSFRVIAFSDNAGEMLDLMPQSVPSLGSGQQDVLTIGTDARTLFTAAASALEKAAGAVDLSMLNPIWVQSKTSAKPFYAIVHRIDVGLVMDLEPVKASDTRVGSAAGALQSHKLAAKAISRLQSLPGGDIGLLCDTVVEEVRDVTGYDLVMAYKFHEDEHGEVVAEIRRSDLEPYLGLHYPATDIPQASRFLFMKNRVRMICDCSAPPVKITQDKELRQPISLAGSTLRAPHGCHAQYMGNMGSVASLVMAMIINDNDEPSGGGGGGGQHKGRRLWGLVVCHHTSPRSVPFLRSACEFLMQVFGLQLNMEAAVAAHVREKHILRTQTLLCDMLLRDAPIGIVSQSPNIMDLVKCDGAALYYGKRFWLLGITPSEAQIKDIAEWLLEHHKDSTGLSTDSLADAGYPGAASLGDEVCGMAAAKITAKDFLFWFRSHTAKEVKWGGAKHDPDDKDDGRKMHPRSSFKAFLEVVKRRSLPWEDVEMDAIHSLQLILRGSFQDIDDSDTKTMIHARLNDLKLQGMDELSTVANEMVRLIETATAPILAVDSSGFINGWNAKVADVTGLPVTEAMGRSLAKELVLHESADMVERLLYLALQGDEEQNVELKLKTFGGQKDKEAVILVVNACASRDVSDNVVGVCFVGQDVTGQKVVMDKFTRIQGDYKAIVQNPNPLIPPIFGADEFGYCSEWNPAMEKLSGWRREEVLGKMLVGEIFGIQMMYCRLKGQDAVTKFMIVLNSAADGQDTEKFPFAFFDRQGKYVEALLTATKRADAEGSITGVFCFLHIASAELQQALTVQRATEKVALSKLKELAYIRQEIKNPLYGIMFTRTLMETTDLSEDQKQYVETGAVCEKQIRKILDDMDLESIEDGYLELDTTEFMMGTVMDAVISQGMITSKEKNLQLIRETPKEIKAMFLYGDQVRLQQVLADFLLNAIRFTPSSENWVGIKVATSRKRLGGVVHVMHLEFRITHPGVGLPEELVQEMFDRGRGMTQEGLGLSMCRKLVKLMNGEVEYIREAGKNYFLVSLELPLAQRDDAGSVKFQASS</sequence>
<feature type="chain" id="PRO_0000171994" description="Phytochrome 1">
    <location>
        <begin position="1"/>
        <end position="1134"/>
    </location>
</feature>
<feature type="domain" description="GAF">
    <location>
        <begin position="219"/>
        <end position="401"/>
    </location>
</feature>
<feature type="domain" description="PAS 1" evidence="3">
    <location>
        <begin position="616"/>
        <end position="687"/>
    </location>
</feature>
<feature type="domain" description="PAC" evidence="4">
    <location>
        <begin position="690"/>
        <end position="746"/>
    </location>
</feature>
<feature type="domain" description="PAS 2" evidence="3">
    <location>
        <begin position="750"/>
        <end position="821"/>
    </location>
</feature>
<feature type="domain" description="Histidine kinase" evidence="2">
    <location>
        <begin position="901"/>
        <end position="1121"/>
    </location>
</feature>
<feature type="binding site" description="covalent" evidence="1">
    <location>
        <position position="324"/>
    </location>
    <ligand>
        <name>phytochromobilin</name>
        <dbReference type="ChEBI" id="CHEBI:189064"/>
    </ligand>
</feature>
<keyword id="KW-0157">Chromophore</keyword>
<keyword id="KW-0600">Photoreceptor protein</keyword>
<keyword id="KW-0675">Receptor</keyword>
<keyword id="KW-0677">Repeat</keyword>
<keyword id="KW-0716">Sensory transduction</keyword>
<keyword id="KW-0804">Transcription</keyword>
<keyword id="KW-0805">Transcription regulation</keyword>
<accession>Q01549</accession>
<protein>
    <recommendedName>
        <fullName>Phytochrome 1</fullName>
    </recommendedName>
</protein>
<comment type="function">
    <text>Regulatory photoreceptor which exists in two forms that are reversibly interconvertible by light: the Pr form that absorbs maximally in the red region of the spectrum and the Pfr form that absorbs maximally in the far-red region. Photoconversion of Pr to Pfr induces an array of morphogenic responses, whereas reconversion of Pfr to Pr cancels the induction of those responses. Pfr controls the expression of a number of nuclear genes including those encoding the small subunit of ribulose-bisphosphate carboxylase, chlorophyll A/B binding protein, protochlorophyllide reductase, rRNA, etc. It also controls the expression of its own gene(s) in a negative feedback fashion.</text>
</comment>
<comment type="subunit">
    <text>Homodimer.</text>
</comment>
<comment type="PTM">
    <text evidence="1">Contains one covalently linked phytochromobilin chromophore.</text>
</comment>
<comment type="similarity">
    <text evidence="5">Belongs to the phytochrome family.</text>
</comment>
<organism>
    <name type="scientific">Selaginella martensii</name>
    <name type="common">Martens's spike moss</name>
    <dbReference type="NCBI Taxonomy" id="3247"/>
    <lineage>
        <taxon>Eukaryota</taxon>
        <taxon>Viridiplantae</taxon>
        <taxon>Streptophyta</taxon>
        <taxon>Embryophyta</taxon>
        <taxon>Tracheophyta</taxon>
        <taxon>Lycopodiopsida</taxon>
        <taxon>Selaginellales</taxon>
        <taxon>Selaginellaceae</taxon>
        <taxon>Selaginella</taxon>
    </lineage>
</organism>
<proteinExistence type="inferred from homology"/>
<gene>
    <name type="primary">PHY1</name>
</gene>
<evidence type="ECO:0000250" key="1"/>
<evidence type="ECO:0000255" key="2">
    <source>
        <dbReference type="PROSITE-ProRule" id="PRU00107"/>
    </source>
</evidence>
<evidence type="ECO:0000255" key="3">
    <source>
        <dbReference type="PROSITE-ProRule" id="PRU00140"/>
    </source>
</evidence>
<evidence type="ECO:0000255" key="4">
    <source>
        <dbReference type="PROSITE-ProRule" id="PRU00141"/>
    </source>
</evidence>
<evidence type="ECO:0000305" key="5"/>
<dbReference type="EMBL" id="X61458">
    <property type="protein sequence ID" value="CAA43698.1"/>
    <property type="molecule type" value="Genomic_DNA"/>
</dbReference>
<dbReference type="PIR" id="S31280">
    <property type="entry name" value="S31280"/>
</dbReference>
<dbReference type="SMR" id="Q01549"/>
<dbReference type="GO" id="GO:0000155">
    <property type="term" value="F:phosphorelay sensor kinase activity"/>
    <property type="evidence" value="ECO:0007669"/>
    <property type="project" value="InterPro"/>
</dbReference>
<dbReference type="GO" id="GO:0009881">
    <property type="term" value="F:photoreceptor activity"/>
    <property type="evidence" value="ECO:0007669"/>
    <property type="project" value="UniProtKB-KW"/>
</dbReference>
<dbReference type="GO" id="GO:0042803">
    <property type="term" value="F:protein homodimerization activity"/>
    <property type="evidence" value="ECO:0007669"/>
    <property type="project" value="InterPro"/>
</dbReference>
<dbReference type="GO" id="GO:0009584">
    <property type="term" value="P:detection of visible light"/>
    <property type="evidence" value="ECO:0007669"/>
    <property type="project" value="InterPro"/>
</dbReference>
<dbReference type="GO" id="GO:0009585">
    <property type="term" value="P:red, far-red light phototransduction"/>
    <property type="evidence" value="ECO:0007669"/>
    <property type="project" value="InterPro"/>
</dbReference>
<dbReference type="GO" id="GO:0006355">
    <property type="term" value="P:regulation of DNA-templated transcription"/>
    <property type="evidence" value="ECO:0007669"/>
    <property type="project" value="InterPro"/>
</dbReference>
<dbReference type="CDD" id="cd16932">
    <property type="entry name" value="HATPase_Phy-like"/>
    <property type="match status" value="1"/>
</dbReference>
<dbReference type="CDD" id="cd00082">
    <property type="entry name" value="HisKA"/>
    <property type="match status" value="1"/>
</dbReference>
<dbReference type="CDD" id="cd00130">
    <property type="entry name" value="PAS"/>
    <property type="match status" value="2"/>
</dbReference>
<dbReference type="FunFam" id="3.30.450.20:FF:000034">
    <property type="entry name" value="Phytochrome"/>
    <property type="match status" value="1"/>
</dbReference>
<dbReference type="FunFam" id="3.30.450.20:FF:000039">
    <property type="entry name" value="Phytochrome"/>
    <property type="match status" value="1"/>
</dbReference>
<dbReference type="FunFam" id="3.30.450.270:FF:000001">
    <property type="entry name" value="Phytochrome"/>
    <property type="match status" value="1"/>
</dbReference>
<dbReference type="Gene3D" id="3.30.450.270">
    <property type="match status" value="1"/>
</dbReference>
<dbReference type="Gene3D" id="3.30.450.40">
    <property type="match status" value="1"/>
</dbReference>
<dbReference type="Gene3D" id="3.30.565.10">
    <property type="entry name" value="Histidine kinase-like ATPase, C-terminal domain"/>
    <property type="match status" value="1"/>
</dbReference>
<dbReference type="Gene3D" id="3.30.450.20">
    <property type="entry name" value="PAS domain"/>
    <property type="match status" value="3"/>
</dbReference>
<dbReference type="InterPro" id="IPR003018">
    <property type="entry name" value="GAF"/>
</dbReference>
<dbReference type="InterPro" id="IPR029016">
    <property type="entry name" value="GAF-like_dom_sf"/>
</dbReference>
<dbReference type="InterPro" id="IPR036890">
    <property type="entry name" value="HATPase_C_sf"/>
</dbReference>
<dbReference type="InterPro" id="IPR005467">
    <property type="entry name" value="His_kinase_dom"/>
</dbReference>
<dbReference type="InterPro" id="IPR003661">
    <property type="entry name" value="HisK_dim/P_dom"/>
</dbReference>
<dbReference type="InterPro" id="IPR000014">
    <property type="entry name" value="PAS"/>
</dbReference>
<dbReference type="InterPro" id="IPR000700">
    <property type="entry name" value="PAS-assoc_C"/>
</dbReference>
<dbReference type="InterPro" id="IPR035965">
    <property type="entry name" value="PAS-like_dom_sf"/>
</dbReference>
<dbReference type="InterPro" id="IPR013654">
    <property type="entry name" value="PAS_2"/>
</dbReference>
<dbReference type="InterPro" id="IPR013767">
    <property type="entry name" value="PAS_fold"/>
</dbReference>
<dbReference type="InterPro" id="IPR044767">
    <property type="entry name" value="Phy_HATPase-like"/>
</dbReference>
<dbReference type="InterPro" id="IPR016132">
    <property type="entry name" value="Phyto_chromo_attachment"/>
</dbReference>
<dbReference type="InterPro" id="IPR013516">
    <property type="entry name" value="Phyto_chromo_BS"/>
</dbReference>
<dbReference type="InterPro" id="IPR001294">
    <property type="entry name" value="Phytochrome"/>
</dbReference>
<dbReference type="InterPro" id="IPR012129">
    <property type="entry name" value="Phytochrome_A-E"/>
</dbReference>
<dbReference type="InterPro" id="IPR013515">
    <property type="entry name" value="Phytochrome_cen-reg"/>
</dbReference>
<dbReference type="InterPro" id="IPR043150">
    <property type="entry name" value="Phytochrome_PHY_sf"/>
</dbReference>
<dbReference type="NCBIfam" id="TIGR00229">
    <property type="entry name" value="sensory_box"/>
    <property type="match status" value="1"/>
</dbReference>
<dbReference type="PANTHER" id="PTHR47876">
    <property type="entry name" value="OS08G0260000 PROTEIN"/>
    <property type="match status" value="1"/>
</dbReference>
<dbReference type="PANTHER" id="PTHR47876:SF3">
    <property type="entry name" value="PHYTOCHROME 1"/>
    <property type="match status" value="1"/>
</dbReference>
<dbReference type="Pfam" id="PF01590">
    <property type="entry name" value="GAF"/>
    <property type="match status" value="1"/>
</dbReference>
<dbReference type="Pfam" id="PF02518">
    <property type="entry name" value="HATPase_c"/>
    <property type="match status" value="1"/>
</dbReference>
<dbReference type="Pfam" id="PF00512">
    <property type="entry name" value="HisKA"/>
    <property type="match status" value="1"/>
</dbReference>
<dbReference type="Pfam" id="PF00989">
    <property type="entry name" value="PAS"/>
    <property type="match status" value="2"/>
</dbReference>
<dbReference type="Pfam" id="PF08446">
    <property type="entry name" value="PAS_2"/>
    <property type="match status" value="1"/>
</dbReference>
<dbReference type="Pfam" id="PF00360">
    <property type="entry name" value="PHY"/>
    <property type="match status" value="1"/>
</dbReference>
<dbReference type="PIRSF" id="PIRSF000084">
    <property type="entry name" value="Phytochrome"/>
    <property type="match status" value="1"/>
</dbReference>
<dbReference type="PRINTS" id="PR01033">
    <property type="entry name" value="PHYTOCHROME"/>
</dbReference>
<dbReference type="SMART" id="SM00065">
    <property type="entry name" value="GAF"/>
    <property type="match status" value="1"/>
</dbReference>
<dbReference type="SMART" id="SM00387">
    <property type="entry name" value="HATPase_c"/>
    <property type="match status" value="1"/>
</dbReference>
<dbReference type="SMART" id="SM00388">
    <property type="entry name" value="HisKA"/>
    <property type="match status" value="1"/>
</dbReference>
<dbReference type="SMART" id="SM00091">
    <property type="entry name" value="PAS"/>
    <property type="match status" value="2"/>
</dbReference>
<dbReference type="SUPFAM" id="SSF55874">
    <property type="entry name" value="ATPase domain of HSP90 chaperone/DNA topoisomerase II/histidine kinase"/>
    <property type="match status" value="1"/>
</dbReference>
<dbReference type="SUPFAM" id="SSF55781">
    <property type="entry name" value="GAF domain-like"/>
    <property type="match status" value="2"/>
</dbReference>
<dbReference type="SUPFAM" id="SSF55785">
    <property type="entry name" value="PYP-like sensor domain (PAS domain)"/>
    <property type="match status" value="3"/>
</dbReference>
<dbReference type="PROSITE" id="PS50109">
    <property type="entry name" value="HIS_KIN"/>
    <property type="match status" value="1"/>
</dbReference>
<dbReference type="PROSITE" id="PS50113">
    <property type="entry name" value="PAC"/>
    <property type="match status" value="1"/>
</dbReference>
<dbReference type="PROSITE" id="PS50112">
    <property type="entry name" value="PAS"/>
    <property type="match status" value="2"/>
</dbReference>
<dbReference type="PROSITE" id="PS00245">
    <property type="entry name" value="PHYTOCHROME_1"/>
    <property type="match status" value="1"/>
</dbReference>
<dbReference type="PROSITE" id="PS50046">
    <property type="entry name" value="PHYTOCHROME_2"/>
    <property type="match status" value="1"/>
</dbReference>
<reference key="1">
    <citation type="journal article" date="1992" name="Photochem. Photobiol.">
        <title>Phytochrome evolution: a phylogenetic tree with the first complete sequence of phytochrome from a cryptogamic plant (Selaginella martensii spring).</title>
        <authorList>
            <person name="Hanelt S."/>
            <person name="Braun B."/>
            <person name="Marx S."/>
            <person name="Schneider-Poetsch H.A.W."/>
        </authorList>
    </citation>
    <scope>NUCLEOTIDE SEQUENCE [GENOMIC DNA]</scope>
    <source>
        <strain>Spring</strain>
    </source>
</reference>